<protein>
    <recommendedName>
        <fullName evidence="1">Potassium/proton antiporter CemA</fullName>
    </recommendedName>
    <alternativeName>
        <fullName evidence="1">Chloroplast envelope membrane protein A</fullName>
        <shortName evidence="1">CemA</shortName>
    </alternativeName>
</protein>
<organism>
    <name type="scientific">Aethionema cordifolium</name>
    <name type="common">Lebanon stonecress</name>
    <dbReference type="NCBI Taxonomy" id="434059"/>
    <lineage>
        <taxon>Eukaryota</taxon>
        <taxon>Viridiplantae</taxon>
        <taxon>Streptophyta</taxon>
        <taxon>Embryophyta</taxon>
        <taxon>Tracheophyta</taxon>
        <taxon>Spermatophyta</taxon>
        <taxon>Magnoliopsida</taxon>
        <taxon>eudicotyledons</taxon>
        <taxon>Gunneridae</taxon>
        <taxon>Pentapetalae</taxon>
        <taxon>rosids</taxon>
        <taxon>malvids</taxon>
        <taxon>Brassicales</taxon>
        <taxon>Brassicaceae</taxon>
        <taxon>Aethionemeae</taxon>
        <taxon>Aethionema</taxon>
    </lineage>
</organism>
<geneLocation type="chloroplast"/>
<dbReference type="EMBL" id="AP009366">
    <property type="protein sequence ID" value="BAF49782.1"/>
    <property type="molecule type" value="Genomic_DNA"/>
</dbReference>
<dbReference type="RefSeq" id="YP_001122958.1">
    <property type="nucleotide sequence ID" value="NC_009265.1"/>
</dbReference>
<dbReference type="SMR" id="A4QJC7"/>
<dbReference type="GeneID" id="4968586"/>
<dbReference type="GO" id="GO:0009706">
    <property type="term" value="C:chloroplast inner membrane"/>
    <property type="evidence" value="ECO:0007669"/>
    <property type="project" value="UniProtKB-SubCell"/>
</dbReference>
<dbReference type="GO" id="GO:0015297">
    <property type="term" value="F:antiporter activity"/>
    <property type="evidence" value="ECO:0007669"/>
    <property type="project" value="UniProtKB-KW"/>
</dbReference>
<dbReference type="GO" id="GO:0015078">
    <property type="term" value="F:proton transmembrane transporter activity"/>
    <property type="evidence" value="ECO:0007669"/>
    <property type="project" value="UniProtKB-UniRule"/>
</dbReference>
<dbReference type="GO" id="GO:0006813">
    <property type="term" value="P:potassium ion transport"/>
    <property type="evidence" value="ECO:0007669"/>
    <property type="project" value="UniProtKB-UniRule"/>
</dbReference>
<dbReference type="HAMAP" id="MF_01308">
    <property type="entry name" value="CemA_PxcA"/>
    <property type="match status" value="1"/>
</dbReference>
<dbReference type="InterPro" id="IPR004282">
    <property type="entry name" value="CemA"/>
</dbReference>
<dbReference type="PANTHER" id="PTHR33650:SF2">
    <property type="entry name" value="CHLOROPLAST ENVELOPE MEMBRANE PROTEIN"/>
    <property type="match status" value="1"/>
</dbReference>
<dbReference type="PANTHER" id="PTHR33650">
    <property type="entry name" value="CHLOROPLAST ENVELOPE MEMBRANE PROTEIN-RELATED"/>
    <property type="match status" value="1"/>
</dbReference>
<dbReference type="Pfam" id="PF03040">
    <property type="entry name" value="CemA"/>
    <property type="match status" value="1"/>
</dbReference>
<proteinExistence type="inferred from homology"/>
<evidence type="ECO:0000255" key="1">
    <source>
        <dbReference type="HAMAP-Rule" id="MF_01308"/>
    </source>
</evidence>
<evidence type="ECO:0000305" key="2"/>
<name>CEMA_AETCO</name>
<reference key="1">
    <citation type="submission" date="2007-03" db="EMBL/GenBank/DDBJ databases">
        <title>Sequencing analysis of Aethionema coridifolium chloroplast DNA.</title>
        <authorList>
            <person name="Hosouchi T."/>
            <person name="Tsuruoka H."/>
            <person name="Kotani H."/>
        </authorList>
    </citation>
    <scope>NUCLEOTIDE SEQUENCE [LARGE SCALE GENOMIC DNA]</scope>
</reference>
<sequence>MAKKKAFIPFLYFTSIVFFPWWISLCCNKSLKTWITNWWNTRQRETFLNEIQEKSLLEKFIQLEELFQLDEMIKEYPETDLQKFRLGIHKETIQFIKIHNEYRIHTIFNFSTNLISFVILSSYSFWGKEKLFILNSWVQEFLYNLSDTIKAFLILLLTDLCIGFHSPHGWELMIGYIYKDFGFAHYEQLLSGLVSTFPVILDTIFKYWIFRYLNRVSPSLVVIYHAIND</sequence>
<feature type="chain" id="PRO_0000293508" description="Potassium/proton antiporter CemA">
    <location>
        <begin position="1"/>
        <end position="229"/>
    </location>
</feature>
<feature type="transmembrane region" description="Helical" evidence="1">
    <location>
        <begin position="6"/>
        <end position="26"/>
    </location>
</feature>
<feature type="transmembrane region" description="Helical" evidence="1">
    <location>
        <begin position="107"/>
        <end position="127"/>
    </location>
</feature>
<feature type="transmembrane region" description="Helical" evidence="1">
    <location>
        <begin position="152"/>
        <end position="172"/>
    </location>
</feature>
<feature type="transmembrane region" description="Helical" evidence="1">
    <location>
        <begin position="190"/>
        <end position="210"/>
    </location>
</feature>
<accession>A4QJC7</accession>
<gene>
    <name evidence="1" type="primary">cemA</name>
    <name type="synonym">ycf10</name>
</gene>
<comment type="function">
    <text evidence="1">Contributes to K(+)/H(+) antiport activity by supporting proton efflux to control proton extrusion and homeostasis in chloroplasts in a light-dependent manner to modulate photosynthesis. Prevents excessive induction of non-photochemical quenching (NPQ) under continuous-light conditions. Indirectly promotes efficient inorganic carbon uptake into chloroplasts.</text>
</comment>
<comment type="catalytic activity">
    <reaction evidence="1">
        <text>K(+)(in) + H(+)(out) = K(+)(out) + H(+)(in)</text>
        <dbReference type="Rhea" id="RHEA:29467"/>
        <dbReference type="ChEBI" id="CHEBI:15378"/>
        <dbReference type="ChEBI" id="CHEBI:29103"/>
    </reaction>
</comment>
<comment type="subcellular location">
    <subcellularLocation>
        <location evidence="1">Plastid</location>
        <location evidence="1">Chloroplast inner membrane</location>
        <topology evidence="1">Multi-pass membrane protein</topology>
    </subcellularLocation>
</comment>
<comment type="similarity">
    <text evidence="1 2">Belongs to the CemA family.</text>
</comment>
<keyword id="KW-0050">Antiport</keyword>
<keyword id="KW-0150">Chloroplast</keyword>
<keyword id="KW-0375">Hydrogen ion transport</keyword>
<keyword id="KW-0406">Ion transport</keyword>
<keyword id="KW-0472">Membrane</keyword>
<keyword id="KW-0934">Plastid</keyword>
<keyword id="KW-1001">Plastid inner membrane</keyword>
<keyword id="KW-0630">Potassium</keyword>
<keyword id="KW-0633">Potassium transport</keyword>
<keyword id="KW-0812">Transmembrane</keyword>
<keyword id="KW-1133">Transmembrane helix</keyword>
<keyword id="KW-0813">Transport</keyword>